<proteinExistence type="inferred from homology"/>
<sequence>DRDSCVDKSKCSKYGYYGQCDKCCKKAGDRAGNCVYFKCKCNQ</sequence>
<accession>Q86QU8</accession>
<feature type="chain" id="PRO_0000066852" description="Potassium channel toxin gamma-KTx 4.6">
    <location>
        <begin position="1"/>
        <end position="43"/>
    </location>
</feature>
<feature type="disulfide bond" evidence="3">
    <location>
        <begin position="5"/>
        <end position="23"/>
    </location>
</feature>
<feature type="disulfide bond" evidence="3">
    <location>
        <begin position="11"/>
        <end position="34"/>
    </location>
</feature>
<feature type="disulfide bond" evidence="3">
    <location>
        <begin position="20"/>
        <end position="39"/>
    </location>
</feature>
<feature type="disulfide bond" evidence="3">
    <location>
        <begin position="24"/>
        <end position="41"/>
    </location>
</feature>
<name>KGX46_CENLI</name>
<dbReference type="EMBL" id="AY159345">
    <property type="protein sequence ID" value="AAO22223.1"/>
    <property type="molecule type" value="mRNA"/>
</dbReference>
<dbReference type="SMR" id="Q86QU8"/>
<dbReference type="GO" id="GO:0005576">
    <property type="term" value="C:extracellular region"/>
    <property type="evidence" value="ECO:0007669"/>
    <property type="project" value="UniProtKB-SubCell"/>
</dbReference>
<dbReference type="GO" id="GO:0019870">
    <property type="term" value="F:potassium channel inhibitor activity"/>
    <property type="evidence" value="ECO:0007669"/>
    <property type="project" value="InterPro"/>
</dbReference>
<dbReference type="GO" id="GO:0090729">
    <property type="term" value="F:toxin activity"/>
    <property type="evidence" value="ECO:0007669"/>
    <property type="project" value="UniProtKB-KW"/>
</dbReference>
<dbReference type="Gene3D" id="3.30.30.10">
    <property type="entry name" value="Knottin, scorpion toxin-like"/>
    <property type="match status" value="1"/>
</dbReference>
<dbReference type="InterPro" id="IPR012622">
    <property type="entry name" value="Ergtoxin"/>
</dbReference>
<dbReference type="InterPro" id="IPR036574">
    <property type="entry name" value="Scorpion_toxin-like_sf"/>
</dbReference>
<dbReference type="Pfam" id="PF08086">
    <property type="entry name" value="Toxin_17"/>
    <property type="match status" value="1"/>
</dbReference>
<dbReference type="SUPFAM" id="SSF57095">
    <property type="entry name" value="Scorpion toxin-like"/>
    <property type="match status" value="1"/>
</dbReference>
<dbReference type="PROSITE" id="PS60026">
    <property type="entry name" value="ERGTX"/>
    <property type="match status" value="1"/>
</dbReference>
<reference key="1">
    <citation type="journal article" date="2002" name="FEBS Lett.">
        <title>A large number of novel Ergtoxin-like genes and ERG K+-channels blocking peptides from scorpions of the genus Centruroides.</title>
        <authorList>
            <person name="Corona M."/>
            <person name="Gurrola G.B."/>
            <person name="Merino E."/>
            <person name="Cassulini R.R."/>
            <person name="Valdez-Cruz N.A."/>
            <person name="Garcia B."/>
            <person name="Ramirez-Dominguez M.E."/>
            <person name="Coronas F.I."/>
            <person name="Zamudio F.Z."/>
            <person name="Wanke E."/>
            <person name="Possani L.D."/>
        </authorList>
    </citation>
    <scope>NUCLEOTIDE SEQUENCE [MRNA]</scope>
    <scope>NOMENCLATURE</scope>
    <source>
        <tissue>Venom gland</tissue>
    </source>
</reference>
<keyword id="KW-1015">Disulfide bond</keyword>
<keyword id="KW-0872">Ion channel impairing toxin</keyword>
<keyword id="KW-0960">Knottin</keyword>
<keyword id="KW-0528">Neurotoxin</keyword>
<keyword id="KW-0632">Potassium channel impairing toxin</keyword>
<keyword id="KW-0964">Secreted</keyword>
<keyword id="KW-0800">Toxin</keyword>
<keyword id="KW-1220">Voltage-gated potassium channel impairing toxin</keyword>
<evidence type="ECO:0000250" key="1"/>
<evidence type="ECO:0000250" key="2">
    <source>
        <dbReference type="UniProtKB" id="P59940"/>
    </source>
</evidence>
<evidence type="ECO:0000250" key="3">
    <source>
        <dbReference type="UniProtKB" id="Q86QT3"/>
    </source>
</evidence>
<evidence type="ECO:0000250" key="4">
    <source>
        <dbReference type="UniProtKB" id="Q86QU9"/>
    </source>
</evidence>
<evidence type="ECO:0000303" key="5">
    <source>
    </source>
</evidence>
<evidence type="ECO:0000305" key="6"/>
<protein>
    <recommendedName>
        <fullName evidence="5">Potassium channel toxin gamma-KTx 4.6</fullName>
    </recommendedName>
    <alternativeName>
        <fullName evidence="6">CllErgTx3</fullName>
        <shortName evidence="6">CllErg3</shortName>
        <shortName evidence="5">ErgTx3</shortName>
    </alternativeName>
    <alternativeName>
        <fullName evidence="5">Ergtoxin-like protein</fullName>
    </alternativeName>
</protein>
<organism>
    <name type="scientific">Centruroides limpidus</name>
    <name type="common">Mexican scorpion</name>
    <dbReference type="NCBI Taxonomy" id="6876"/>
    <lineage>
        <taxon>Eukaryota</taxon>
        <taxon>Metazoa</taxon>
        <taxon>Ecdysozoa</taxon>
        <taxon>Arthropoda</taxon>
        <taxon>Chelicerata</taxon>
        <taxon>Arachnida</taxon>
        <taxon>Scorpiones</taxon>
        <taxon>Buthida</taxon>
        <taxon>Buthoidea</taxon>
        <taxon>Buthidae</taxon>
        <taxon>Centruroides</taxon>
    </lineage>
</organism>
<comment type="function">
    <text evidence="2">Reversibly blocks Kv11/ERG potassium channels.</text>
</comment>
<comment type="subcellular location">
    <subcellularLocation>
        <location evidence="4">Secreted</location>
    </subcellularLocation>
</comment>
<comment type="tissue specificity">
    <text evidence="6">Expressed by the venom gland.</text>
</comment>
<comment type="domain">
    <text evidence="1">The presence of a 'disulfide through disulfide knot' structurally defines this protein as a knottin.</text>
</comment>
<comment type="domain">
    <text evidence="3">Has the CSalpha/beta fold, which comprises one or two short alpha helices connected to anti-parallel beta-sheets stabilized by three or four disulfide bonds.</text>
</comment>
<comment type="similarity">
    <text evidence="6">Belongs to the ergtoxin family. Gamma-KTx 4 subfamily.</text>
</comment>